<keyword id="KW-0030">Aminoacyl-tRNA synthetase</keyword>
<keyword id="KW-0067">ATP-binding</keyword>
<keyword id="KW-0963">Cytoplasm</keyword>
<keyword id="KW-0436">Ligase</keyword>
<keyword id="KW-0479">Metal-binding</keyword>
<keyword id="KW-0547">Nucleotide-binding</keyword>
<keyword id="KW-0648">Protein biosynthesis</keyword>
<keyword id="KW-0694">RNA-binding</keyword>
<keyword id="KW-0820">tRNA-binding</keyword>
<keyword id="KW-0862">Zinc</keyword>
<accession>A4WCF6</accession>
<dbReference type="EC" id="6.1.1.10" evidence="1"/>
<dbReference type="EMBL" id="CP000653">
    <property type="protein sequence ID" value="ABP61386.1"/>
    <property type="status" value="ALT_INIT"/>
    <property type="molecule type" value="Genomic_DNA"/>
</dbReference>
<dbReference type="RefSeq" id="WP_041689466.1">
    <property type="nucleotide sequence ID" value="NC_009436.1"/>
</dbReference>
<dbReference type="SMR" id="A4WCF6"/>
<dbReference type="STRING" id="399742.Ent638_2721"/>
<dbReference type="KEGG" id="ent:Ent638_2721"/>
<dbReference type="eggNOG" id="COG0073">
    <property type="taxonomic scope" value="Bacteria"/>
</dbReference>
<dbReference type="eggNOG" id="COG0143">
    <property type="taxonomic scope" value="Bacteria"/>
</dbReference>
<dbReference type="HOGENOM" id="CLU_009710_7_0_6"/>
<dbReference type="OrthoDB" id="9810191at2"/>
<dbReference type="Proteomes" id="UP000000230">
    <property type="component" value="Chromosome"/>
</dbReference>
<dbReference type="GO" id="GO:0005829">
    <property type="term" value="C:cytosol"/>
    <property type="evidence" value="ECO:0007669"/>
    <property type="project" value="TreeGrafter"/>
</dbReference>
<dbReference type="GO" id="GO:0005524">
    <property type="term" value="F:ATP binding"/>
    <property type="evidence" value="ECO:0007669"/>
    <property type="project" value="UniProtKB-UniRule"/>
</dbReference>
<dbReference type="GO" id="GO:0046872">
    <property type="term" value="F:metal ion binding"/>
    <property type="evidence" value="ECO:0007669"/>
    <property type="project" value="UniProtKB-KW"/>
</dbReference>
<dbReference type="GO" id="GO:0004825">
    <property type="term" value="F:methionine-tRNA ligase activity"/>
    <property type="evidence" value="ECO:0007669"/>
    <property type="project" value="UniProtKB-UniRule"/>
</dbReference>
<dbReference type="GO" id="GO:0000049">
    <property type="term" value="F:tRNA binding"/>
    <property type="evidence" value="ECO:0007669"/>
    <property type="project" value="UniProtKB-KW"/>
</dbReference>
<dbReference type="GO" id="GO:0006431">
    <property type="term" value="P:methionyl-tRNA aminoacylation"/>
    <property type="evidence" value="ECO:0007669"/>
    <property type="project" value="UniProtKB-UniRule"/>
</dbReference>
<dbReference type="CDD" id="cd07957">
    <property type="entry name" value="Anticodon_Ia_Met"/>
    <property type="match status" value="1"/>
</dbReference>
<dbReference type="CDD" id="cd00814">
    <property type="entry name" value="MetRS_core"/>
    <property type="match status" value="1"/>
</dbReference>
<dbReference type="CDD" id="cd02800">
    <property type="entry name" value="tRNA_bind_EcMetRS_like"/>
    <property type="match status" value="1"/>
</dbReference>
<dbReference type="FunFam" id="1.10.730.10:FF:000005">
    <property type="entry name" value="Methionine--tRNA ligase"/>
    <property type="match status" value="1"/>
</dbReference>
<dbReference type="FunFam" id="2.20.28.20:FF:000001">
    <property type="entry name" value="Methionine--tRNA ligase"/>
    <property type="match status" value="1"/>
</dbReference>
<dbReference type="FunFam" id="2.40.50.140:FF:000042">
    <property type="entry name" value="Methionine--tRNA ligase"/>
    <property type="match status" value="1"/>
</dbReference>
<dbReference type="Gene3D" id="3.40.50.620">
    <property type="entry name" value="HUPs"/>
    <property type="match status" value="1"/>
</dbReference>
<dbReference type="Gene3D" id="1.10.730.10">
    <property type="entry name" value="Isoleucyl-tRNA Synthetase, Domain 1"/>
    <property type="match status" value="1"/>
</dbReference>
<dbReference type="Gene3D" id="2.20.28.20">
    <property type="entry name" value="Methionyl-tRNA synthetase, Zn-domain"/>
    <property type="match status" value="1"/>
</dbReference>
<dbReference type="Gene3D" id="2.40.50.140">
    <property type="entry name" value="Nucleic acid-binding proteins"/>
    <property type="match status" value="1"/>
</dbReference>
<dbReference type="HAMAP" id="MF_00098">
    <property type="entry name" value="Met_tRNA_synth_type1"/>
    <property type="match status" value="1"/>
</dbReference>
<dbReference type="InterPro" id="IPR001412">
    <property type="entry name" value="aa-tRNA-synth_I_CS"/>
</dbReference>
<dbReference type="InterPro" id="IPR041872">
    <property type="entry name" value="Anticodon_Met"/>
</dbReference>
<dbReference type="InterPro" id="IPR004495">
    <property type="entry name" value="Met-tRNA-synth_bsu_C"/>
</dbReference>
<dbReference type="InterPro" id="IPR023458">
    <property type="entry name" value="Met-tRNA_ligase_1"/>
</dbReference>
<dbReference type="InterPro" id="IPR014758">
    <property type="entry name" value="Met-tRNA_synth"/>
</dbReference>
<dbReference type="InterPro" id="IPR015413">
    <property type="entry name" value="Methionyl/Leucyl_tRNA_Synth"/>
</dbReference>
<dbReference type="InterPro" id="IPR033911">
    <property type="entry name" value="MetRS_core"/>
</dbReference>
<dbReference type="InterPro" id="IPR029038">
    <property type="entry name" value="MetRS_Zn"/>
</dbReference>
<dbReference type="InterPro" id="IPR012340">
    <property type="entry name" value="NA-bd_OB-fold"/>
</dbReference>
<dbReference type="InterPro" id="IPR014729">
    <property type="entry name" value="Rossmann-like_a/b/a_fold"/>
</dbReference>
<dbReference type="InterPro" id="IPR002547">
    <property type="entry name" value="tRNA-bd_dom"/>
</dbReference>
<dbReference type="InterPro" id="IPR009080">
    <property type="entry name" value="tRNAsynth_Ia_anticodon-bd"/>
</dbReference>
<dbReference type="NCBIfam" id="TIGR00398">
    <property type="entry name" value="metG"/>
    <property type="match status" value="1"/>
</dbReference>
<dbReference type="NCBIfam" id="TIGR00399">
    <property type="entry name" value="metG_C_term"/>
    <property type="match status" value="1"/>
</dbReference>
<dbReference type="NCBIfam" id="NF001100">
    <property type="entry name" value="PRK00133.1"/>
    <property type="match status" value="1"/>
</dbReference>
<dbReference type="PANTHER" id="PTHR45765">
    <property type="entry name" value="METHIONINE--TRNA LIGASE"/>
    <property type="match status" value="1"/>
</dbReference>
<dbReference type="PANTHER" id="PTHR45765:SF1">
    <property type="entry name" value="METHIONINE--TRNA LIGASE, CYTOPLASMIC"/>
    <property type="match status" value="1"/>
</dbReference>
<dbReference type="Pfam" id="PF19303">
    <property type="entry name" value="Anticodon_3"/>
    <property type="match status" value="1"/>
</dbReference>
<dbReference type="Pfam" id="PF09334">
    <property type="entry name" value="tRNA-synt_1g"/>
    <property type="match status" value="1"/>
</dbReference>
<dbReference type="Pfam" id="PF01588">
    <property type="entry name" value="tRNA_bind"/>
    <property type="match status" value="1"/>
</dbReference>
<dbReference type="PRINTS" id="PR01041">
    <property type="entry name" value="TRNASYNTHMET"/>
</dbReference>
<dbReference type="SUPFAM" id="SSF47323">
    <property type="entry name" value="Anticodon-binding domain of a subclass of class I aminoacyl-tRNA synthetases"/>
    <property type="match status" value="1"/>
</dbReference>
<dbReference type="SUPFAM" id="SSF57770">
    <property type="entry name" value="Methionyl-tRNA synthetase (MetRS), Zn-domain"/>
    <property type="match status" value="1"/>
</dbReference>
<dbReference type="SUPFAM" id="SSF50249">
    <property type="entry name" value="Nucleic acid-binding proteins"/>
    <property type="match status" value="1"/>
</dbReference>
<dbReference type="SUPFAM" id="SSF52374">
    <property type="entry name" value="Nucleotidylyl transferase"/>
    <property type="match status" value="1"/>
</dbReference>
<dbReference type="PROSITE" id="PS00178">
    <property type="entry name" value="AA_TRNA_LIGASE_I"/>
    <property type="match status" value="1"/>
</dbReference>
<dbReference type="PROSITE" id="PS50886">
    <property type="entry name" value="TRBD"/>
    <property type="match status" value="1"/>
</dbReference>
<protein>
    <recommendedName>
        <fullName evidence="1">Methionine--tRNA ligase</fullName>
        <ecNumber evidence="1">6.1.1.10</ecNumber>
    </recommendedName>
    <alternativeName>
        <fullName evidence="1">Methionyl-tRNA synthetase</fullName>
        <shortName evidence="1">MetRS</shortName>
    </alternativeName>
</protein>
<sequence>MTQVAKKILVTCALPYANGSIHLGHMLEHIQADVWVRYQRMRGHQVNFICADDAHGTPIMLKAQQLGISPEQMITEMSQEHQTDFAGFDISYDNYHSTHSDENRELSELIYTRLKENGFIKNRTISQLFDPEKGMFLPDRFVKGTCPKCKSPDQYGDNCEVCGATYSPTELIEPKSVVSGATPVMRDSEHFFFDLPSFSEMLQAWTRSGALQEQVANKMQEWFESGLQQWDISRDAPYFGFEIPDAPGKYFYVWLDAPIGYMGSFKNLCDKRGDTTSFDEYWKKDSDAELYHFIGKDIVYFHSLFWPAMLEGSGFRKPTNLFVHGYVTVNGAKMSKSRGTFIKASTWLNHFDADSLRYYYTAKLSSRIDDIDLNLEDFVQRVNADIVNKVVNLASRNAGFIGKRFDGVMAAELADPALYKTFTDAATAIGEAWEAREFGKAVREIMALADLANRYVDEQAPWVVAKQEGRDADLQAICSMGINLFRVLMTYLKPVLPTLSERAEAFLNTELTWDAIQQPLLSHKVNTFKALYNRIEMKQVEALVEASKEEVKAAAAPVTGPLADEPIQETITFDDFAKVDLRVALIENAEFVEGSDKLLRLTLDLGGEKRNVFSGIRSAYPDPQVLIGRQTVMVANLAPRKMRFGISEGMVMAAGPGGKDIFLLSPDEGAKPGQQVK</sequence>
<comment type="function">
    <text evidence="1">Is required not only for elongation of protein synthesis but also for the initiation of all mRNA translation through initiator tRNA(fMet) aminoacylation.</text>
</comment>
<comment type="catalytic activity">
    <reaction evidence="1">
        <text>tRNA(Met) + L-methionine + ATP = L-methionyl-tRNA(Met) + AMP + diphosphate</text>
        <dbReference type="Rhea" id="RHEA:13481"/>
        <dbReference type="Rhea" id="RHEA-COMP:9667"/>
        <dbReference type="Rhea" id="RHEA-COMP:9698"/>
        <dbReference type="ChEBI" id="CHEBI:30616"/>
        <dbReference type="ChEBI" id="CHEBI:33019"/>
        <dbReference type="ChEBI" id="CHEBI:57844"/>
        <dbReference type="ChEBI" id="CHEBI:78442"/>
        <dbReference type="ChEBI" id="CHEBI:78530"/>
        <dbReference type="ChEBI" id="CHEBI:456215"/>
        <dbReference type="EC" id="6.1.1.10"/>
    </reaction>
</comment>
<comment type="cofactor">
    <cofactor evidence="1">
        <name>Zn(2+)</name>
        <dbReference type="ChEBI" id="CHEBI:29105"/>
    </cofactor>
    <text evidence="1">Binds 1 zinc ion per subunit.</text>
</comment>
<comment type="subunit">
    <text evidence="1">Homodimer.</text>
</comment>
<comment type="subcellular location">
    <subcellularLocation>
        <location evidence="1">Cytoplasm</location>
    </subcellularLocation>
</comment>
<comment type="similarity">
    <text evidence="1">Belongs to the class-I aminoacyl-tRNA synthetase family. MetG type 1 subfamily.</text>
</comment>
<comment type="sequence caution" evidence="2">
    <conflict type="erroneous initiation">
        <sequence resource="EMBL-CDS" id="ABP61386"/>
    </conflict>
</comment>
<evidence type="ECO:0000255" key="1">
    <source>
        <dbReference type="HAMAP-Rule" id="MF_00098"/>
    </source>
</evidence>
<evidence type="ECO:0000305" key="2"/>
<name>SYM_ENT38</name>
<proteinExistence type="inferred from homology"/>
<organism>
    <name type="scientific">Enterobacter sp. (strain 638)</name>
    <dbReference type="NCBI Taxonomy" id="399742"/>
    <lineage>
        <taxon>Bacteria</taxon>
        <taxon>Pseudomonadati</taxon>
        <taxon>Pseudomonadota</taxon>
        <taxon>Gammaproteobacteria</taxon>
        <taxon>Enterobacterales</taxon>
        <taxon>Enterobacteriaceae</taxon>
        <taxon>Enterobacter</taxon>
    </lineage>
</organism>
<gene>
    <name evidence="1" type="primary">metG</name>
    <name type="ordered locus">Ent638_2721</name>
</gene>
<feature type="chain" id="PRO_0000331817" description="Methionine--tRNA ligase">
    <location>
        <begin position="1"/>
        <end position="677"/>
    </location>
</feature>
<feature type="domain" description="tRNA-binding" evidence="1">
    <location>
        <begin position="575"/>
        <end position="677"/>
    </location>
</feature>
<feature type="short sequence motif" description="'HIGH' region">
    <location>
        <begin position="15"/>
        <end position="25"/>
    </location>
</feature>
<feature type="short sequence motif" description="'KMSKS' region">
    <location>
        <begin position="333"/>
        <end position="337"/>
    </location>
</feature>
<feature type="binding site" evidence="1">
    <location>
        <position position="146"/>
    </location>
    <ligand>
        <name>Zn(2+)</name>
        <dbReference type="ChEBI" id="CHEBI:29105"/>
    </ligand>
</feature>
<feature type="binding site" evidence="1">
    <location>
        <position position="149"/>
    </location>
    <ligand>
        <name>Zn(2+)</name>
        <dbReference type="ChEBI" id="CHEBI:29105"/>
    </ligand>
</feature>
<feature type="binding site" evidence="1">
    <location>
        <position position="159"/>
    </location>
    <ligand>
        <name>Zn(2+)</name>
        <dbReference type="ChEBI" id="CHEBI:29105"/>
    </ligand>
</feature>
<feature type="binding site" evidence="1">
    <location>
        <position position="162"/>
    </location>
    <ligand>
        <name>Zn(2+)</name>
        <dbReference type="ChEBI" id="CHEBI:29105"/>
    </ligand>
</feature>
<feature type="binding site" evidence="1">
    <location>
        <position position="336"/>
    </location>
    <ligand>
        <name>ATP</name>
        <dbReference type="ChEBI" id="CHEBI:30616"/>
    </ligand>
</feature>
<reference key="1">
    <citation type="journal article" date="2010" name="PLoS Genet.">
        <title>Genome sequence of the plant growth promoting endophytic bacterium Enterobacter sp. 638.</title>
        <authorList>
            <person name="Taghavi S."/>
            <person name="van der Lelie D."/>
            <person name="Hoffman A."/>
            <person name="Zhang Y.B."/>
            <person name="Walla M.D."/>
            <person name="Vangronsveld J."/>
            <person name="Newman L."/>
            <person name="Monchy S."/>
        </authorList>
    </citation>
    <scope>NUCLEOTIDE SEQUENCE [LARGE SCALE GENOMIC DNA]</scope>
    <source>
        <strain>638</strain>
    </source>
</reference>